<sequence>MPLSYQHFRKLLLLDDEAGPLEDELPRLADEGLNRRVAEDLNLGNLNVSIPWTHKVGNFTGLYSSTVPVFNPEWQTPSFPHIHLQEDIINRCQQYVGPLTVNEKRRLKLIMPARFYPNLTKYLPLDKGIKPYYPEHAVNHYFKTRHYLHTLWKAGILYKRETTRSASFCGSPYSWEQELQHGRLVFQTSTRHGDESFCSQSSGILSRSPFGPCVRSQLKQSRLGLQPQQGSLAKGKSGQSGSIRARVHPTTLQSFGVEPSGSGHIDNGASSTSSCLLQSAVRKTAYSHLSTFKRQSSSGHAVELHNLPPNSARSQSERPIFPCWWLQFRNSKPCSDYCLSHIVNLLEDWGPCTEHGEHHIRIPRTPARVTGGVFLVDKNPHNTAESRLVVDFSQFSRGNYRVSWPKFAVPNLQSLTNLLSSNLSWLSLDVSAAFYHIPLHPAAMPHLLVGSSGLSRYVARLSSNSRIFNHQHGTLQNLHDSCSRNLYVSLLLLYKTFGRKLHLYSHPIILGFRKIPMGVGLSPFLLAQFTSAICSVVRRAFPHCLAFSYMDDVVLGAKSVQHLESLFTAVTNFLLSLGIHLNPNKTKRWGYSLNFMGYVIGCYGSLPQSHIIQKIKECFRKLPVNRPIDWKVCQRIVGLLGFAAPFTQCGYPALLPLYACIQSKQAFIFSPTYKAFLCQQYMNLYPVARQRPGLCQVFADATPTGWGLVMGHQRMRGTFVAPLPIHTAELLAACFARSRSGANILGTDNSVVLARKYTSFPWLLGCAANWILRGTSFVYVPSALNPADDPSRGRLGLYRPLLHLPFRPTTGRTSLYAVSPSVPSHLPDRVHFASPLHVAWKPP</sequence>
<keyword id="KW-0235">DNA replication</keyword>
<keyword id="KW-0238">DNA-binding</keyword>
<keyword id="KW-0239">DNA-directed DNA polymerase</keyword>
<keyword id="KW-0255">Endonuclease</keyword>
<keyword id="KW-0945">Host-virus interaction</keyword>
<keyword id="KW-0378">Hydrolase</keyword>
<keyword id="KW-1090">Inhibition of host innate immune response by virus</keyword>
<keyword id="KW-1113">Inhibition of host RLR pathway by virus</keyword>
<keyword id="KW-0460">Magnesium</keyword>
<keyword id="KW-0479">Metal-binding</keyword>
<keyword id="KW-0511">Multifunctional enzyme</keyword>
<keyword id="KW-0540">Nuclease</keyword>
<keyword id="KW-0548">Nucleotidyltransferase</keyword>
<keyword id="KW-0695">RNA-directed DNA polymerase</keyword>
<keyword id="KW-0808">Transferase</keyword>
<keyword id="KW-0899">Viral immunoevasion</keyword>
<accession>Q913A7</accession>
<protein>
    <recommendedName>
        <fullName evidence="1">Protein P</fullName>
    </recommendedName>
    <domain>
        <recommendedName>
            <fullName evidence="1">DNA-directed DNA polymerase</fullName>
            <ecNumber evidence="1">2.7.7.7</ecNumber>
        </recommendedName>
    </domain>
    <domain>
        <recommendedName>
            <fullName evidence="1">RNA-directed DNA polymerase</fullName>
            <ecNumber evidence="1">2.7.7.49</ecNumber>
        </recommendedName>
    </domain>
    <domain>
        <recommendedName>
            <fullName evidence="1">Ribonuclease H</fullName>
            <ecNumber evidence="1">3.1.26.4</ecNumber>
        </recommendedName>
    </domain>
</protein>
<reference key="1">
    <citation type="journal article" date="2002" name="J. Gen. Virol.">
        <title>The dominant hepatitis B virus genotype identified in Tibet is a C/D hybrid.</title>
        <authorList>
            <person name="Cui C."/>
            <person name="Shi J."/>
            <person name="Hui L."/>
            <person name="Xi H."/>
            <person name="Zhuoma X."/>
            <person name="Quni X."/>
            <person name="Tsedan X."/>
            <person name="Hu G."/>
        </authorList>
    </citation>
    <scope>NUCLEOTIDE SEQUENCE [GENOMIC DNA]</scope>
</reference>
<reference key="2">
    <citation type="journal article" date="2007" name="World J. Gastroenterol.">
        <title>Hepatitis B virus replication.</title>
        <authorList>
            <person name="Beck J."/>
            <person name="Nassal M."/>
        </authorList>
    </citation>
    <scope>REVIEW</scope>
</reference>
<gene>
    <name evidence="1" type="primary">P</name>
</gene>
<organismHost>
    <name type="scientific">Homo sapiens</name>
    <name type="common">Human</name>
    <dbReference type="NCBI Taxonomy" id="9606"/>
</organismHost>
<organismHost>
    <name type="scientific">Pan troglodytes</name>
    <name type="common">Chimpanzee</name>
    <dbReference type="NCBI Taxonomy" id="9598"/>
</organismHost>
<comment type="function">
    <text evidence="1">Multifunctional enzyme that converts the viral RNA genome into dsDNA in viral cytoplasmic capsids. This enzyme displays a DNA polymerase activity that can copy either DNA or RNA templates, and a ribonuclease H (RNase H) activity that cleaves the RNA strand of RNA-DNA heteroduplexes in a partially processive 3'- to 5'-endonucleasic mode. Neo-synthesized pregenomic RNA (pgRNA) are encapsidated together with the P protein, and reverse-transcribed inside the nucleocapsid. Initiation of reverse-transcription occurs first by binding the epsilon loop on the pgRNA genome, and is initiated by protein priming, thereby the 5'-end of (-)DNA is covalently linked to P protein. Partial (+)DNA is synthesized from the (-)DNA template and generates the relaxed circular DNA (RC-DNA) genome. After budding and infection, the RC-DNA migrates in the nucleus, and is converted into a plasmid-like covalently closed circular DNA (cccDNA). The activity of P protein does not seem to be necessary for cccDNA generation, and is presumably released from (+)DNA by host nuclear DNA repair machinery.</text>
</comment>
<comment type="catalytic activity">
    <reaction evidence="1">
        <text>DNA(n) + a 2'-deoxyribonucleoside 5'-triphosphate = DNA(n+1) + diphosphate</text>
        <dbReference type="Rhea" id="RHEA:22508"/>
        <dbReference type="Rhea" id="RHEA-COMP:17339"/>
        <dbReference type="Rhea" id="RHEA-COMP:17340"/>
        <dbReference type="ChEBI" id="CHEBI:33019"/>
        <dbReference type="ChEBI" id="CHEBI:61560"/>
        <dbReference type="ChEBI" id="CHEBI:173112"/>
        <dbReference type="EC" id="2.7.7.7"/>
    </reaction>
</comment>
<comment type="catalytic activity">
    <reaction evidence="1">
        <text>DNA(n) + a 2'-deoxyribonucleoside 5'-triphosphate = DNA(n+1) + diphosphate</text>
        <dbReference type="Rhea" id="RHEA:22508"/>
        <dbReference type="Rhea" id="RHEA-COMP:17339"/>
        <dbReference type="Rhea" id="RHEA-COMP:17340"/>
        <dbReference type="ChEBI" id="CHEBI:33019"/>
        <dbReference type="ChEBI" id="CHEBI:61560"/>
        <dbReference type="ChEBI" id="CHEBI:173112"/>
        <dbReference type="EC" id="2.7.7.49"/>
    </reaction>
</comment>
<comment type="catalytic activity">
    <reaction evidence="1">
        <text>Endonucleolytic cleavage to 5'-phosphomonoester.</text>
        <dbReference type="EC" id="3.1.26.4"/>
    </reaction>
</comment>
<comment type="activity regulation">
    <text evidence="1">Activated by host HSP70 and HSP40 in vitro to be able to bind the epsilon loop of the pgRNA. Because deletion of the RNase H region renders the protein partly chaperone-independent, the chaperones may be needed indirectly to relieve occlusion of the RNA-binding site by this domain. Inhibited by several reverse-transcriptase inhibitors: Lamivudine, Adefovir and Entecavir.</text>
</comment>
<comment type="domain">
    <text evidence="1">Terminal protein domain (TP) is hepadnavirus-specific. Spacer domain is highly variable and separates the TP and RT domains. Polymerase/reverse-transcriptase domain (RT) and ribonuclease H domain (RH) are similar to retrovirus reverse transcriptase/RNase H.</text>
</comment>
<comment type="domain">
    <text evidence="1">The polymerase/reverse transcriptase (RT) and ribonuclease H (RH) domains are structured in five subdomains: finger, palm, thumb, connection and RNase H. Within the palm subdomain, the 'primer grip' region is thought to be involved in the positioning of the primer terminus for accommodating the incoming nucleotide. The RH domain stabilizes the association of RT with primer-template.</text>
</comment>
<comment type="miscellaneous">
    <text evidence="1">Hepadnaviral virions contain probably just one P protein molecule per particle.</text>
</comment>
<comment type="similarity">
    <text evidence="1">Belongs to the hepadnaviridae P protein family.</text>
</comment>
<evidence type="ECO:0000255" key="1">
    <source>
        <dbReference type="HAMAP-Rule" id="MF_04073"/>
    </source>
</evidence>
<feature type="chain" id="PRO_0000323263" description="Protein P">
    <location>
        <begin position="1"/>
        <end position="843"/>
    </location>
</feature>
<feature type="domain" description="Reverse transcriptase" evidence="1">
    <location>
        <begin position="357"/>
        <end position="600"/>
    </location>
</feature>
<feature type="region of interest" description="Terminal protein domain (TP)" evidence="1">
    <location>
        <begin position="1"/>
        <end position="177"/>
    </location>
</feature>
<feature type="region of interest" description="Spacer" evidence="1">
    <location>
        <begin position="178"/>
        <end position="346"/>
    </location>
</feature>
<feature type="region of interest" description="Polymerase/reverse transcriptase domain (RT)" evidence="1">
    <location>
        <begin position="347"/>
        <end position="690"/>
    </location>
</feature>
<feature type="binding site" evidence="1">
    <location>
        <position position="429"/>
    </location>
    <ligand>
        <name>Mg(2+)</name>
        <dbReference type="ChEBI" id="CHEBI:18420"/>
        <note>catalytic</note>
    </ligand>
</feature>
<feature type="binding site" evidence="1">
    <location>
        <position position="551"/>
    </location>
    <ligand>
        <name>Mg(2+)</name>
        <dbReference type="ChEBI" id="CHEBI:18420"/>
        <note>catalytic</note>
    </ligand>
</feature>
<feature type="binding site" evidence="1">
    <location>
        <position position="552"/>
    </location>
    <ligand>
        <name>Mg(2+)</name>
        <dbReference type="ChEBI" id="CHEBI:18420"/>
        <note>catalytic</note>
    </ligand>
</feature>
<feature type="site" description="Priming of reverse-transcription by covalently linking the first nucleotide of the (-)DNA" evidence="1">
    <location>
        <position position="63"/>
    </location>
</feature>
<organism>
    <name type="scientific">Hepatitis B virus genotype C subtype ayw (isolate China/Tibet127/2002)</name>
    <name type="common">HBV-C</name>
    <dbReference type="NCBI Taxonomy" id="489469"/>
    <lineage>
        <taxon>Viruses</taxon>
        <taxon>Riboviria</taxon>
        <taxon>Pararnavirae</taxon>
        <taxon>Artverviricota</taxon>
        <taxon>Revtraviricetes</taxon>
        <taxon>Blubervirales</taxon>
        <taxon>Hepadnaviridae</taxon>
        <taxon>Orthohepadnavirus</taxon>
        <taxon>Hepatitis B virus</taxon>
        <taxon>hepatitis B virus genotype C</taxon>
    </lineage>
</organism>
<proteinExistence type="inferred from homology"/>
<dbReference type="EC" id="2.7.7.7" evidence="1"/>
<dbReference type="EC" id="2.7.7.49" evidence="1"/>
<dbReference type="EC" id="3.1.26.4" evidence="1"/>
<dbReference type="EMBL" id="AY057948">
    <property type="protein sequence ID" value="AAL25951.1"/>
    <property type="molecule type" value="Genomic_DNA"/>
</dbReference>
<dbReference type="Proteomes" id="UP000007925">
    <property type="component" value="Genome"/>
</dbReference>
<dbReference type="GO" id="GO:0003677">
    <property type="term" value="F:DNA binding"/>
    <property type="evidence" value="ECO:0007669"/>
    <property type="project" value="UniProtKB-UniRule"/>
</dbReference>
<dbReference type="GO" id="GO:0003887">
    <property type="term" value="F:DNA-directed DNA polymerase activity"/>
    <property type="evidence" value="ECO:0007669"/>
    <property type="project" value="UniProtKB-UniRule"/>
</dbReference>
<dbReference type="GO" id="GO:0046872">
    <property type="term" value="F:metal ion binding"/>
    <property type="evidence" value="ECO:0007669"/>
    <property type="project" value="UniProtKB-UniRule"/>
</dbReference>
<dbReference type="GO" id="GO:0003964">
    <property type="term" value="F:RNA-directed DNA polymerase activity"/>
    <property type="evidence" value="ECO:0007669"/>
    <property type="project" value="UniProtKB-UniRule"/>
</dbReference>
<dbReference type="GO" id="GO:0004523">
    <property type="term" value="F:RNA-DNA hybrid ribonuclease activity"/>
    <property type="evidence" value="ECO:0007669"/>
    <property type="project" value="UniProtKB-UniRule"/>
</dbReference>
<dbReference type="GO" id="GO:0006260">
    <property type="term" value="P:DNA replication"/>
    <property type="evidence" value="ECO:0007669"/>
    <property type="project" value="UniProtKB-UniRule"/>
</dbReference>
<dbReference type="GO" id="GO:0052170">
    <property type="term" value="P:symbiont-mediated suppression of host innate immune response"/>
    <property type="evidence" value="ECO:0007669"/>
    <property type="project" value="UniProtKB-UniRule"/>
</dbReference>
<dbReference type="FunFam" id="3.30.70.270:FF:000009">
    <property type="entry name" value="Protein P"/>
    <property type="match status" value="1"/>
</dbReference>
<dbReference type="Gene3D" id="3.30.70.270">
    <property type="match status" value="1"/>
</dbReference>
<dbReference type="HAMAP" id="MF_04073">
    <property type="entry name" value="HBV_DPOL"/>
    <property type="match status" value="1"/>
</dbReference>
<dbReference type="InterPro" id="IPR043502">
    <property type="entry name" value="DNA/RNA_pol_sf"/>
</dbReference>
<dbReference type="InterPro" id="IPR001462">
    <property type="entry name" value="DNApol_viral_C"/>
</dbReference>
<dbReference type="InterPro" id="IPR000201">
    <property type="entry name" value="DNApol_viral_N"/>
</dbReference>
<dbReference type="InterPro" id="IPR037531">
    <property type="entry name" value="HBV_DPOL"/>
</dbReference>
<dbReference type="InterPro" id="IPR043128">
    <property type="entry name" value="Rev_trsase/Diguanyl_cyclase"/>
</dbReference>
<dbReference type="InterPro" id="IPR000477">
    <property type="entry name" value="RT_dom"/>
</dbReference>
<dbReference type="InterPro" id="IPR051320">
    <property type="entry name" value="Viral_Replic_Matur_Polypro"/>
</dbReference>
<dbReference type="PANTHER" id="PTHR33064">
    <property type="entry name" value="POL PROTEIN"/>
    <property type="match status" value="1"/>
</dbReference>
<dbReference type="PANTHER" id="PTHR33064:SF37">
    <property type="entry name" value="RIBONUCLEASE H"/>
    <property type="match status" value="1"/>
</dbReference>
<dbReference type="Pfam" id="PF00336">
    <property type="entry name" value="DNA_pol_viral_C"/>
    <property type="match status" value="1"/>
</dbReference>
<dbReference type="Pfam" id="PF00242">
    <property type="entry name" value="DNA_pol_viral_N"/>
    <property type="match status" value="1"/>
</dbReference>
<dbReference type="Pfam" id="PF00078">
    <property type="entry name" value="RVT_1"/>
    <property type="match status" value="1"/>
</dbReference>
<dbReference type="SUPFAM" id="SSF56672">
    <property type="entry name" value="DNA/RNA polymerases"/>
    <property type="match status" value="1"/>
</dbReference>
<dbReference type="PROSITE" id="PS50878">
    <property type="entry name" value="RT_POL"/>
    <property type="match status" value="1"/>
</dbReference>
<name>DPOL_HBVC7</name>